<keyword id="KW-0106">Calcium</keyword>
<keyword id="KW-0963">Cytoplasm</keyword>
<keyword id="KW-0275">Fatty acid biosynthesis</keyword>
<keyword id="KW-0276">Fatty acid metabolism</keyword>
<keyword id="KW-0319">Glycerol metabolism</keyword>
<keyword id="KW-0333">Golgi apparatus</keyword>
<keyword id="KW-0378">Hydrolase</keyword>
<keyword id="KW-1017">Isopeptide bond</keyword>
<keyword id="KW-0434">Leukotriene biosynthesis</keyword>
<keyword id="KW-0444">Lipid biosynthesis</keyword>
<keyword id="KW-0442">Lipid degradation</keyword>
<keyword id="KW-0443">Lipid metabolism</keyword>
<keyword id="KW-0446">Lipid-binding</keyword>
<keyword id="KW-0472">Membrane</keyword>
<keyword id="KW-0479">Metal-binding</keyword>
<keyword id="KW-0539">Nucleus</keyword>
<keyword id="KW-0595">Phospholipid degradation</keyword>
<keyword id="KW-1208">Phospholipid metabolism</keyword>
<keyword id="KW-0597">Phosphoprotein</keyword>
<keyword id="KW-0643">Prostaglandin biosynthesis</keyword>
<keyword id="KW-0644">Prostaglandin metabolism</keyword>
<keyword id="KW-1185">Reference proteome</keyword>
<keyword id="KW-0832">Ubl conjugation</keyword>
<name>PA24A_HORSE</name>
<accession>O77793</accession>
<organism>
    <name type="scientific">Equus caballus</name>
    <name type="common">Horse</name>
    <dbReference type="NCBI Taxonomy" id="9796"/>
    <lineage>
        <taxon>Eukaryota</taxon>
        <taxon>Metazoa</taxon>
        <taxon>Chordata</taxon>
        <taxon>Craniata</taxon>
        <taxon>Vertebrata</taxon>
        <taxon>Euteleostomi</taxon>
        <taxon>Mammalia</taxon>
        <taxon>Eutheria</taxon>
        <taxon>Laurasiatheria</taxon>
        <taxon>Perissodactyla</taxon>
        <taxon>Equidae</taxon>
        <taxon>Equus</taxon>
    </lineage>
</organism>
<gene>
    <name type="primary">PLA2G4A</name>
    <name type="synonym">CPLA2</name>
    <name type="synonym">PLA2G4</name>
</gene>
<feature type="chain" id="PRO_0000187261" description="Cytosolic phospholipase A2">
    <location>
        <begin position="1"/>
        <end position="749"/>
    </location>
</feature>
<feature type="domain" description="C2" evidence="5">
    <location>
        <begin position="6"/>
        <end position="122"/>
    </location>
</feature>
<feature type="domain" description="PLA2c" evidence="6">
    <location>
        <begin position="140"/>
        <end position="740"/>
    </location>
</feature>
<feature type="region of interest" description="Phospholipid binding" evidence="8">
    <location>
        <begin position="1"/>
        <end position="178"/>
    </location>
</feature>
<feature type="region of interest" description="Disordered" evidence="7">
    <location>
        <begin position="427"/>
        <end position="456"/>
    </location>
</feature>
<feature type="active site" description="Nucleophile" evidence="1">
    <location>
        <position position="228"/>
    </location>
</feature>
<feature type="active site" description="Proton acceptor" evidence="1">
    <location>
        <position position="549"/>
    </location>
</feature>
<feature type="binding site" evidence="1">
    <location>
        <position position="40"/>
    </location>
    <ligand>
        <name>Ca(2+)</name>
        <dbReference type="ChEBI" id="CHEBI:29108"/>
        <label>1</label>
    </ligand>
</feature>
<feature type="binding site" evidence="1">
    <location>
        <position position="40"/>
    </location>
    <ligand>
        <name>Ca(2+)</name>
        <dbReference type="ChEBI" id="CHEBI:29108"/>
        <label>2</label>
    </ligand>
</feature>
<feature type="binding site" evidence="1">
    <location>
        <position position="41"/>
    </location>
    <ligand>
        <name>Ca(2+)</name>
        <dbReference type="ChEBI" id="CHEBI:29108"/>
        <label>1</label>
    </ligand>
</feature>
<feature type="binding site" evidence="1">
    <location>
        <position position="43"/>
    </location>
    <ligand>
        <name>Ca(2+)</name>
        <dbReference type="ChEBI" id="CHEBI:29108"/>
        <label>1</label>
    </ligand>
</feature>
<feature type="binding site" evidence="1">
    <location>
        <position position="43"/>
    </location>
    <ligand>
        <name>Ca(2+)</name>
        <dbReference type="ChEBI" id="CHEBI:29108"/>
        <label>2</label>
    </ligand>
</feature>
<feature type="binding site" evidence="1">
    <location>
        <position position="65"/>
    </location>
    <ligand>
        <name>Ca(2+)</name>
        <dbReference type="ChEBI" id="CHEBI:29108"/>
        <label>1</label>
    </ligand>
</feature>
<feature type="binding site" evidence="1">
    <location>
        <position position="93"/>
    </location>
    <ligand>
        <name>Ca(2+)</name>
        <dbReference type="ChEBI" id="CHEBI:29108"/>
        <label>2</label>
    </ligand>
</feature>
<feature type="binding site" evidence="1">
    <location>
        <position position="94"/>
    </location>
    <ligand>
        <name>Ca(2+)</name>
        <dbReference type="ChEBI" id="CHEBI:29108"/>
        <label>2</label>
    </ligand>
</feature>
<feature type="binding site" evidence="1">
    <location>
        <position position="95"/>
    </location>
    <ligand>
        <name>Ca(2+)</name>
        <dbReference type="ChEBI" id="CHEBI:29108"/>
        <label>2</label>
    </ligand>
</feature>
<feature type="modified residue" description="Phosphoserine" evidence="2">
    <location>
        <position position="2"/>
    </location>
</feature>
<feature type="modified residue" description="Phosphothreonine" evidence="2">
    <location>
        <position position="268"/>
    </location>
</feature>
<feature type="modified residue" description="Phosphoserine" evidence="4">
    <location>
        <position position="434"/>
    </location>
</feature>
<feature type="modified residue" description="Phosphoserine" evidence="2">
    <location>
        <position position="435"/>
    </location>
</feature>
<feature type="modified residue" description="Phosphoserine" evidence="2">
    <location>
        <position position="437"/>
    </location>
</feature>
<feature type="modified residue" description="Phosphoserine; by MAPK" evidence="2">
    <location>
        <position position="505"/>
    </location>
</feature>
<feature type="modified residue" description="Phosphoserine" evidence="4">
    <location>
        <position position="515"/>
    </location>
</feature>
<feature type="modified residue" description="Phosphoserine" evidence="2">
    <location>
        <position position="727"/>
    </location>
</feature>
<feature type="modified residue" description="Phosphoserine" evidence="2">
    <location>
        <position position="729"/>
    </location>
</feature>
<feature type="cross-link" description="Glycyl lysine isopeptide (Lys-Gly) (interchain with G-Cter in SUMO2)" evidence="2">
    <location>
        <position position="541"/>
    </location>
</feature>
<feature type="cross-link" description="Glycyl lysine isopeptide (Lys-Gly) (interchain with G-Cter in SUMO2)" evidence="2">
    <location>
        <position position="606"/>
    </location>
</feature>
<dbReference type="EC" id="3.1.1.4" evidence="2"/>
<dbReference type="EC" id="3.1.1.5" evidence="2"/>
<dbReference type="EMBL" id="AF092539">
    <property type="protein sequence ID" value="AAC61774.1"/>
    <property type="molecule type" value="mRNA"/>
</dbReference>
<dbReference type="RefSeq" id="NP_001075312.1">
    <property type="nucleotide sequence ID" value="NM_001081843.1"/>
</dbReference>
<dbReference type="BMRB" id="O77793"/>
<dbReference type="SMR" id="O77793"/>
<dbReference type="FunCoup" id="O77793">
    <property type="interactions" value="498"/>
</dbReference>
<dbReference type="STRING" id="9796.ENSECAP00000030001"/>
<dbReference type="PaxDb" id="9796-ENSECAP00000030001"/>
<dbReference type="GeneID" id="100033889"/>
<dbReference type="KEGG" id="ecb:100033889"/>
<dbReference type="CTD" id="5321"/>
<dbReference type="InParanoid" id="O77793"/>
<dbReference type="OrthoDB" id="419768at2759"/>
<dbReference type="BRENDA" id="3.1.1.4">
    <property type="organism ID" value="2120"/>
</dbReference>
<dbReference type="UniPathway" id="UPA00383"/>
<dbReference type="UniPathway" id="UPA00662"/>
<dbReference type="UniPathway" id="UPA00878"/>
<dbReference type="UniPathway" id="UPA00940"/>
<dbReference type="Proteomes" id="UP000002281">
    <property type="component" value="Unplaced"/>
</dbReference>
<dbReference type="GO" id="GO:0005737">
    <property type="term" value="C:cytoplasm"/>
    <property type="evidence" value="ECO:0000250"/>
    <property type="project" value="UniProtKB"/>
</dbReference>
<dbReference type="GO" id="GO:0005829">
    <property type="term" value="C:cytosol"/>
    <property type="evidence" value="ECO:0000318"/>
    <property type="project" value="GO_Central"/>
</dbReference>
<dbReference type="GO" id="GO:0005783">
    <property type="term" value="C:endoplasmic reticulum"/>
    <property type="evidence" value="ECO:0000318"/>
    <property type="project" value="GO_Central"/>
</dbReference>
<dbReference type="GO" id="GO:0005794">
    <property type="term" value="C:Golgi apparatus"/>
    <property type="evidence" value="ECO:0000318"/>
    <property type="project" value="GO_Central"/>
</dbReference>
<dbReference type="GO" id="GO:0000139">
    <property type="term" value="C:Golgi membrane"/>
    <property type="evidence" value="ECO:0000250"/>
    <property type="project" value="UniProtKB"/>
</dbReference>
<dbReference type="GO" id="GO:0005635">
    <property type="term" value="C:nuclear envelope"/>
    <property type="evidence" value="ECO:0000250"/>
    <property type="project" value="UniProtKB"/>
</dbReference>
<dbReference type="GO" id="GO:0005634">
    <property type="term" value="C:nucleus"/>
    <property type="evidence" value="ECO:0000318"/>
    <property type="project" value="GO_Central"/>
</dbReference>
<dbReference type="GO" id="GO:0005509">
    <property type="term" value="F:calcium ion binding"/>
    <property type="evidence" value="ECO:0000250"/>
    <property type="project" value="UniProtKB"/>
</dbReference>
<dbReference type="GO" id="GO:0047498">
    <property type="term" value="F:calcium-dependent phospholipase A2 activity"/>
    <property type="evidence" value="ECO:0000250"/>
    <property type="project" value="UniProtKB"/>
</dbReference>
<dbReference type="GO" id="GO:0005544">
    <property type="term" value="F:calcium-dependent phospholipid binding"/>
    <property type="evidence" value="ECO:0000250"/>
    <property type="project" value="UniProtKB"/>
</dbReference>
<dbReference type="GO" id="GO:1902387">
    <property type="term" value="F:ceramide 1-phosphate binding"/>
    <property type="evidence" value="ECO:0000250"/>
    <property type="project" value="UniProtKB"/>
</dbReference>
<dbReference type="GO" id="GO:0004622">
    <property type="term" value="F:lysophospholipase activity"/>
    <property type="evidence" value="ECO:0000250"/>
    <property type="project" value="UniProtKB"/>
</dbReference>
<dbReference type="GO" id="GO:0008374">
    <property type="term" value="F:O-acyltransferase activity"/>
    <property type="evidence" value="ECO:0000250"/>
    <property type="project" value="UniProtKB"/>
</dbReference>
<dbReference type="GO" id="GO:0032266">
    <property type="term" value="F:phosphatidylinositol-3-phosphate binding"/>
    <property type="evidence" value="ECO:0000250"/>
    <property type="project" value="UniProtKB"/>
</dbReference>
<dbReference type="GO" id="GO:0070273">
    <property type="term" value="F:phosphatidylinositol-4-phosphate binding"/>
    <property type="evidence" value="ECO:0000250"/>
    <property type="project" value="UniProtKB"/>
</dbReference>
<dbReference type="GO" id="GO:0010314">
    <property type="term" value="F:phosphatidylinositol-5-phosphate binding"/>
    <property type="evidence" value="ECO:0000250"/>
    <property type="project" value="UniProtKB"/>
</dbReference>
<dbReference type="GO" id="GO:0004623">
    <property type="term" value="F:phospholipase A2 activity"/>
    <property type="evidence" value="ECO:0000250"/>
    <property type="project" value="UniProtKB"/>
</dbReference>
<dbReference type="GO" id="GO:0019369">
    <property type="term" value="P:arachidonate metabolic process"/>
    <property type="evidence" value="ECO:0000250"/>
    <property type="project" value="UniProtKB"/>
</dbReference>
<dbReference type="GO" id="GO:0006071">
    <property type="term" value="P:glycerol metabolic process"/>
    <property type="evidence" value="ECO:0007669"/>
    <property type="project" value="UniProtKB-KW"/>
</dbReference>
<dbReference type="GO" id="GO:0046475">
    <property type="term" value="P:glycerophospholipid catabolic process"/>
    <property type="evidence" value="ECO:0000318"/>
    <property type="project" value="GO_Central"/>
</dbReference>
<dbReference type="GO" id="GO:0019370">
    <property type="term" value="P:leukotriene biosynthetic process"/>
    <property type="evidence" value="ECO:0007669"/>
    <property type="project" value="UniProtKB-KW"/>
</dbReference>
<dbReference type="GO" id="GO:0006640">
    <property type="term" value="P:monoacylglycerol biosynthetic process"/>
    <property type="evidence" value="ECO:0000250"/>
    <property type="project" value="UniProtKB"/>
</dbReference>
<dbReference type="GO" id="GO:0034638">
    <property type="term" value="P:phosphatidylcholine catabolic process"/>
    <property type="evidence" value="ECO:0000250"/>
    <property type="project" value="UniProtKB"/>
</dbReference>
<dbReference type="GO" id="GO:0034478">
    <property type="term" value="P:phosphatidylglycerol catabolic process"/>
    <property type="evidence" value="ECO:0000250"/>
    <property type="project" value="UniProtKB"/>
</dbReference>
<dbReference type="GO" id="GO:0001516">
    <property type="term" value="P:prostaglandin biosynthetic process"/>
    <property type="evidence" value="ECO:0000250"/>
    <property type="project" value="UniProtKB"/>
</dbReference>
<dbReference type="CDD" id="cd04036">
    <property type="entry name" value="C2_cPLA2"/>
    <property type="match status" value="1"/>
</dbReference>
<dbReference type="CDD" id="cd07200">
    <property type="entry name" value="cPLA2_Grp-IVA"/>
    <property type="match status" value="1"/>
</dbReference>
<dbReference type="FunFam" id="2.60.40.150:FF:000030">
    <property type="entry name" value="Phospholipase A2"/>
    <property type="match status" value="1"/>
</dbReference>
<dbReference type="Gene3D" id="2.60.40.150">
    <property type="entry name" value="C2 domain"/>
    <property type="match status" value="1"/>
</dbReference>
<dbReference type="Gene3D" id="3.40.1090.10">
    <property type="entry name" value="Cytosolic phospholipase A2 catalytic domain"/>
    <property type="match status" value="1"/>
</dbReference>
<dbReference type="InterPro" id="IPR016035">
    <property type="entry name" value="Acyl_Trfase/lysoPLipase"/>
</dbReference>
<dbReference type="InterPro" id="IPR041847">
    <property type="entry name" value="C2_cPLA2"/>
</dbReference>
<dbReference type="InterPro" id="IPR000008">
    <property type="entry name" value="C2_dom"/>
</dbReference>
<dbReference type="InterPro" id="IPR035892">
    <property type="entry name" value="C2_domain_sf"/>
</dbReference>
<dbReference type="InterPro" id="IPR002642">
    <property type="entry name" value="LysoPLipase_cat_dom"/>
</dbReference>
<dbReference type="PANTHER" id="PTHR10728">
    <property type="entry name" value="CYTOSOLIC PHOSPHOLIPASE A2"/>
    <property type="match status" value="1"/>
</dbReference>
<dbReference type="PANTHER" id="PTHR10728:SF13">
    <property type="entry name" value="CYTOSOLIC PHOSPHOLIPASE A2"/>
    <property type="match status" value="1"/>
</dbReference>
<dbReference type="Pfam" id="PF00168">
    <property type="entry name" value="C2"/>
    <property type="match status" value="1"/>
</dbReference>
<dbReference type="Pfam" id="PF01735">
    <property type="entry name" value="PLA2_B"/>
    <property type="match status" value="1"/>
</dbReference>
<dbReference type="SMART" id="SM00239">
    <property type="entry name" value="C2"/>
    <property type="match status" value="1"/>
</dbReference>
<dbReference type="SMART" id="SM00022">
    <property type="entry name" value="PLAc"/>
    <property type="match status" value="1"/>
</dbReference>
<dbReference type="SUPFAM" id="SSF49562">
    <property type="entry name" value="C2 domain (Calcium/lipid-binding domain, CaLB)"/>
    <property type="match status" value="1"/>
</dbReference>
<dbReference type="SUPFAM" id="SSF52151">
    <property type="entry name" value="FabD/lysophospholipase-like"/>
    <property type="match status" value="1"/>
</dbReference>
<dbReference type="PROSITE" id="PS50004">
    <property type="entry name" value="C2"/>
    <property type="match status" value="1"/>
</dbReference>
<dbReference type="PROSITE" id="PS51210">
    <property type="entry name" value="PLA2C"/>
    <property type="match status" value="1"/>
</dbReference>
<proteinExistence type="evidence at transcript level"/>
<protein>
    <recommendedName>
        <fullName>Cytosolic phospholipase A2</fullName>
        <shortName>cPLA2</shortName>
    </recommendedName>
    <alternativeName>
        <fullName>Phospholipase A2 group IVA</fullName>
    </alternativeName>
    <domain>
        <recommendedName>
            <fullName>Phospholipase A2</fullName>
            <ecNumber evidence="2">3.1.1.4</ecNumber>
        </recommendedName>
        <alternativeName>
            <fullName>Phosphatidylcholine 2-acylhydrolase</fullName>
        </alternativeName>
    </domain>
    <domain>
        <recommendedName>
            <fullName>Lysophospholipase</fullName>
            <ecNumber evidence="2">3.1.1.5</ecNumber>
        </recommendedName>
    </domain>
</protein>
<evidence type="ECO:0000250" key="1"/>
<evidence type="ECO:0000250" key="2">
    <source>
        <dbReference type="UniProtKB" id="P47712"/>
    </source>
</evidence>
<evidence type="ECO:0000250" key="3">
    <source>
        <dbReference type="UniProtKB" id="P47713"/>
    </source>
</evidence>
<evidence type="ECO:0000250" key="4">
    <source>
        <dbReference type="UniProtKB" id="P50393"/>
    </source>
</evidence>
<evidence type="ECO:0000255" key="5">
    <source>
        <dbReference type="PROSITE-ProRule" id="PRU00041"/>
    </source>
</evidence>
<evidence type="ECO:0000255" key="6">
    <source>
        <dbReference type="PROSITE-ProRule" id="PRU00555"/>
    </source>
</evidence>
<evidence type="ECO:0000256" key="7">
    <source>
        <dbReference type="SAM" id="MobiDB-lite"/>
    </source>
</evidence>
<evidence type="ECO:0000305" key="8"/>
<sequence length="749" mass="85454">MSFIDPYQHIIVEHQYSHKFTVVVLRATKVTKGAFGDMLDTPDPYVELFISSTPDSRKRTRHFNNNINPVWNETFEFILDPNQENVLEITLMDANYVMDETLGTATFTLSSMKVGEKKEVPFIFNQVTEMILEMSLEVCSCPDLRFSMALCDQEKTFRQQRKENIKENMKKLLGPKKSEGLYSTRDVPVVAILGSGGGFRAMVGFSGVMKALYESGILDCATYLAGLSGSSWYMSTLYSHPDFPEKGPEEINKELMKNVSYDPLLLLTPQKIKRYVESLWKKKSSGQPVTFTDIFGMLIGETLIHNRMNTTLSSLKEKVNTAQCPLPLFTCLHVKPDVSELMFADWVEFSPYEIGMAKYGTFMAPDLFGSKFFMGTVVKKYEENPLHFLMGVWGSAFSILFNRVLGVSGSQNKGSTMEEELENITAKHIVSNDSSDSDDESQEPKGTENEDAERDYQNDNQASWVHRMLMALVSDSALFNTREGRAGKVHNFMLGLNLNTSYPLSPLRNFTTQESLDDDELDAAVADPDEFERIYEPLDVKSKKIHVVDSGLTFNLPYPLILRPQRGVDLIISFDFSARPSDSSPPFKELLLAEKWAKMNKLPFPKIDPYVFDREGLKECYVFKPKNPDVEKDCPTIIHFVLANINFRKYKAPGVPRETKEEKEIADFDIFDDPESPFSTFNFQYPNQAFKRLHDLMHFNTLNNIDVIKNAMVESIEYRRQNPSRCSVSLSNVEARRFFNKEFLNKPTA</sequence>
<reference key="1">
    <citation type="submission" date="1998-09" db="EMBL/GenBank/DDBJ databases">
        <title>Purification, characterization and cDNA sequencing of calcium-dependent cytosolic phospholipase A2 from equine neutrophils.</title>
        <authorList>
            <person name="Larsson Forsell P.K.A."/>
            <person name="Lindberg A."/>
            <person name="Karlsson S."/>
            <person name="Lindgren J.A."/>
            <person name="Claesson H.-E."/>
        </authorList>
    </citation>
    <scope>NUCLEOTIDE SEQUENCE [MRNA]</scope>
    <source>
        <tissue>Neutrophil</tissue>
    </source>
</reference>
<comment type="function">
    <text evidence="2 3">Has primarily calcium-dependent phospholipase and lysophospholipase activities, with a major role in membrane lipid remodeling and biosynthesis of lipid mediators of the inflammatory response (By similarity). Plays an important role in embryo implantation and parturition through its ability to trigger prostanoid production (By similarity). Preferentially hydrolyzes the ester bond of the fatty acyl group attached at sn-2 position of phospholipids (phospholipase A2 activity). Selectively hydrolyzes sn-2 arachidonoyl group from membrane phospholipids, providing the precursor for eicosanoid biosynthesis via the cyclooxygenase pathway. In an alternative pathway of eicosanoid biosynthesis, hydrolyzes sn-2 fatty acyl chain of eicosanoid lysophopholipids to release free bioactive eicosanoids. Hydrolyzes the ester bond of the fatty acyl group attached at sn-1 position of phospholipids (phospholipase A1 activity) only if an ether linkage rather than an ester linkage is present at the sn-2 position. This hydrolysis is not stereospecific. Has calcium-independent phospholipase A2 and lysophospholipase activities in the presence of phosphoinositides. Has O-acyltransferase activity. Catalyzes the transfer of fatty acyl chains from phospholipids to a primary hydroxyl group of glycerol (sn-1 or sn-3), potentially contributing to monoacylglycerol synthesis (By similarity).</text>
</comment>
<comment type="catalytic activity">
    <reaction evidence="2">
        <text>a 1,2-diacyl-sn-glycero-3-phosphocholine + H2O = a 1-acyl-sn-glycero-3-phosphocholine + a fatty acid + H(+)</text>
        <dbReference type="Rhea" id="RHEA:15801"/>
        <dbReference type="ChEBI" id="CHEBI:15377"/>
        <dbReference type="ChEBI" id="CHEBI:15378"/>
        <dbReference type="ChEBI" id="CHEBI:28868"/>
        <dbReference type="ChEBI" id="CHEBI:57643"/>
        <dbReference type="ChEBI" id="CHEBI:58168"/>
        <dbReference type="EC" id="3.1.1.4"/>
    </reaction>
    <physiologicalReaction direction="left-to-right" evidence="2">
        <dbReference type="Rhea" id="RHEA:15802"/>
    </physiologicalReaction>
</comment>
<comment type="catalytic activity">
    <reaction evidence="2">
        <text>a 1-O-alkyl-2-acyl-sn-glycero-3-phosphocholine + H2O = a 1-O-alkyl-sn-glycero-3-phosphocholine + a fatty acid + H(+)</text>
        <dbReference type="Rhea" id="RHEA:36231"/>
        <dbReference type="ChEBI" id="CHEBI:15377"/>
        <dbReference type="ChEBI" id="CHEBI:15378"/>
        <dbReference type="ChEBI" id="CHEBI:28868"/>
        <dbReference type="ChEBI" id="CHEBI:30909"/>
        <dbReference type="ChEBI" id="CHEBI:36702"/>
        <dbReference type="EC" id="3.1.1.4"/>
    </reaction>
    <physiologicalReaction direction="left-to-right" evidence="2">
        <dbReference type="Rhea" id="RHEA:36232"/>
    </physiologicalReaction>
</comment>
<comment type="catalytic activity">
    <reaction evidence="2">
        <text>a 1-acyl-sn-glycero-3-phosphocholine + H2O = sn-glycerol 3-phosphocholine + a fatty acid + H(+)</text>
        <dbReference type="Rhea" id="RHEA:15177"/>
        <dbReference type="ChEBI" id="CHEBI:15377"/>
        <dbReference type="ChEBI" id="CHEBI:15378"/>
        <dbReference type="ChEBI" id="CHEBI:16870"/>
        <dbReference type="ChEBI" id="CHEBI:28868"/>
        <dbReference type="ChEBI" id="CHEBI:58168"/>
        <dbReference type="EC" id="3.1.1.5"/>
    </reaction>
    <physiologicalReaction direction="left-to-right" evidence="2">
        <dbReference type="Rhea" id="RHEA:15178"/>
    </physiologicalReaction>
</comment>
<comment type="catalytic activity">
    <reaction evidence="2">
        <text>1-hexadecanoyl-2-(5Z,8Z,11Z,14Z-eicosatetraenoyl)-sn-glycero-3-phosphocholine + H2O = 1-hexadecanoyl-sn-glycero-3-phosphocholine + (5Z,8Z,11Z,14Z)-eicosatetraenoate + H(+)</text>
        <dbReference type="Rhea" id="RHEA:40427"/>
        <dbReference type="ChEBI" id="CHEBI:15377"/>
        <dbReference type="ChEBI" id="CHEBI:15378"/>
        <dbReference type="ChEBI" id="CHEBI:32395"/>
        <dbReference type="ChEBI" id="CHEBI:72998"/>
        <dbReference type="ChEBI" id="CHEBI:73003"/>
    </reaction>
    <physiologicalReaction direction="left-to-right" evidence="2">
        <dbReference type="Rhea" id="RHEA:40428"/>
    </physiologicalReaction>
</comment>
<comment type="catalytic activity">
    <reaction evidence="2">
        <text>1,2-di-(5Z,8Z,11Z,14Z-eicosatetraenoyl)-sn-glycero-3-phosphocholine + H2O = 1-(5Z,8Z,11Z,14Z-eicosatetraenoyl)-sn-glycero-3-phosphocholine + (5Z,8Z,11Z,14Z)-eicosatetraenoate + H(+)</text>
        <dbReference type="Rhea" id="RHEA:41075"/>
        <dbReference type="ChEBI" id="CHEBI:15377"/>
        <dbReference type="ChEBI" id="CHEBI:15378"/>
        <dbReference type="ChEBI" id="CHEBI:32395"/>
        <dbReference type="ChEBI" id="CHEBI:60657"/>
        <dbReference type="ChEBI" id="CHEBI:74344"/>
    </reaction>
    <physiologicalReaction direction="left-to-right" evidence="2">
        <dbReference type="Rhea" id="RHEA:41076"/>
    </physiologicalReaction>
</comment>
<comment type="catalytic activity">
    <reaction evidence="2">
        <text>1-octadecanoyl-2-(5Z,8Z,11Z,14Z-eicosatetraenoyl)-sn-glycero-3-phosphocholine + H2O = 1-octadecanoyl-sn-glycero-3-phosphocholine + (5Z,8Z,11Z,14Z)-eicosatetraenoate + H(+)</text>
        <dbReference type="Rhea" id="RHEA:40519"/>
        <dbReference type="ChEBI" id="CHEBI:15377"/>
        <dbReference type="ChEBI" id="CHEBI:15378"/>
        <dbReference type="ChEBI" id="CHEBI:32395"/>
        <dbReference type="ChEBI" id="CHEBI:73858"/>
        <dbReference type="ChEBI" id="CHEBI:74965"/>
    </reaction>
    <physiologicalReaction direction="left-to-right" evidence="2">
        <dbReference type="Rhea" id="RHEA:40520"/>
    </physiologicalReaction>
</comment>
<comment type="catalytic activity">
    <reaction evidence="2">
        <text>1-hexadecanoyl-2-(9Z,12Z-octadecadienoyl)-sn-glycero-3-phosphocholine + H2O = (9Z,12Z)-octadecadienoate + 1-hexadecanoyl-sn-glycero-3-phosphocholine + H(+)</text>
        <dbReference type="Rhea" id="RHEA:40811"/>
        <dbReference type="ChEBI" id="CHEBI:15377"/>
        <dbReference type="ChEBI" id="CHEBI:15378"/>
        <dbReference type="ChEBI" id="CHEBI:30245"/>
        <dbReference type="ChEBI" id="CHEBI:72998"/>
        <dbReference type="ChEBI" id="CHEBI:73002"/>
    </reaction>
    <physiologicalReaction direction="left-to-right" evidence="2">
        <dbReference type="Rhea" id="RHEA:40812"/>
    </physiologicalReaction>
</comment>
<comment type="catalytic activity">
    <reaction evidence="2">
        <text>1-octadecanoyl-2-(9Z,12Z,15Z-octadecatrienoyl)-sn-glycero-3-phosphocholine + H2O = (9Z,12Z,15Z)-octadecatrienoate + 1-octadecanoyl-sn-glycero-3-phosphocholine + H(+)</text>
        <dbReference type="Rhea" id="RHEA:41307"/>
        <dbReference type="ChEBI" id="CHEBI:15377"/>
        <dbReference type="ChEBI" id="CHEBI:15378"/>
        <dbReference type="ChEBI" id="CHEBI:32387"/>
        <dbReference type="ChEBI" id="CHEBI:73858"/>
        <dbReference type="ChEBI" id="CHEBI:78022"/>
    </reaction>
    <physiologicalReaction direction="left-to-right" evidence="2">
        <dbReference type="Rhea" id="RHEA:41308"/>
    </physiologicalReaction>
</comment>
<comment type="catalytic activity">
    <reaction evidence="2">
        <text>1-(5Z,8Z,11Z,14Z-eicosatetraenoyl)-2-hexadecanoyl-sn-glycero-3-phosphocholine + H2O = 1-(5Z,8Z,11Z,14Z-eicosatetraenoyl)-sn-glycero-3-phosphocholine + hexadecanoate + H(+)</text>
        <dbReference type="Rhea" id="RHEA:41071"/>
        <dbReference type="ChEBI" id="CHEBI:7896"/>
        <dbReference type="ChEBI" id="CHEBI:15377"/>
        <dbReference type="ChEBI" id="CHEBI:15378"/>
        <dbReference type="ChEBI" id="CHEBI:74344"/>
        <dbReference type="ChEBI" id="CHEBI:77694"/>
    </reaction>
    <physiologicalReaction direction="left-to-right" evidence="2">
        <dbReference type="Rhea" id="RHEA:41072"/>
    </physiologicalReaction>
</comment>
<comment type="catalytic activity">
    <reaction evidence="2">
        <text>1-O-hexadecyl-2-(5Z,8Z,11Z,14Z)-eicosatetraenoyl-sn-glycero-3-phosphocholine + H2O = 1-O-hexadecyl-sn-glycero-3-phosphocholine + (5Z,8Z,11Z,14Z)-eicosatetraenoate + H(+)</text>
        <dbReference type="Rhea" id="RHEA:41067"/>
        <dbReference type="ChEBI" id="CHEBI:15377"/>
        <dbReference type="ChEBI" id="CHEBI:15378"/>
        <dbReference type="ChEBI" id="CHEBI:32395"/>
        <dbReference type="ChEBI" id="CHEBI:55430"/>
        <dbReference type="ChEBI" id="CHEBI:64496"/>
    </reaction>
    <physiologicalReaction direction="left-to-right" evidence="2">
        <dbReference type="Rhea" id="RHEA:41068"/>
    </physiologicalReaction>
</comment>
<comment type="catalytic activity">
    <reaction evidence="2">
        <text>1,2-di-(9Z-octadecenoyl)-sn-glycero-3-phospho-(1'-sn-glycerol) + H2O = 1-(9Z-octadecenoyl)-sn-glycero-3-phospho-(1'-sn-glycerol) + (9Z)-octadecenoate + H(+)</text>
        <dbReference type="Rhea" id="RHEA:41123"/>
        <dbReference type="ChEBI" id="CHEBI:15377"/>
        <dbReference type="ChEBI" id="CHEBI:15378"/>
        <dbReference type="ChEBI" id="CHEBI:30823"/>
        <dbReference type="ChEBI" id="CHEBI:72828"/>
        <dbReference type="ChEBI" id="CHEBI:75163"/>
    </reaction>
    <physiologicalReaction direction="left-to-right" evidence="2">
        <dbReference type="Rhea" id="RHEA:41124"/>
    </physiologicalReaction>
</comment>
<comment type="catalytic activity">
    <reaction evidence="2">
        <text>1-octadecanoyl-2-(5Z,8Z,11Z,14Z-eicosatetraenoyl)-sn-glycero-3-phosphate + H2O = 1-octadecanoyl-sn-glycero-3-phosphate + (5Z,8Z,11Z,14Z)-eicosatetraenoate + H(+)</text>
        <dbReference type="Rhea" id="RHEA:40451"/>
        <dbReference type="ChEBI" id="CHEBI:15377"/>
        <dbReference type="ChEBI" id="CHEBI:15378"/>
        <dbReference type="ChEBI" id="CHEBI:32395"/>
        <dbReference type="ChEBI" id="CHEBI:74565"/>
        <dbReference type="ChEBI" id="CHEBI:77091"/>
    </reaction>
    <physiologicalReaction direction="left-to-right" evidence="2">
        <dbReference type="Rhea" id="RHEA:40452"/>
    </physiologicalReaction>
</comment>
<comment type="catalytic activity">
    <reaction evidence="2">
        <text>1-hexadecanoyl-sn-glycero-3-phosphocholine + H2O = sn-glycerol 3-phosphocholine + hexadecanoate + H(+)</text>
        <dbReference type="Rhea" id="RHEA:40435"/>
        <dbReference type="ChEBI" id="CHEBI:7896"/>
        <dbReference type="ChEBI" id="CHEBI:15377"/>
        <dbReference type="ChEBI" id="CHEBI:15378"/>
        <dbReference type="ChEBI" id="CHEBI:16870"/>
        <dbReference type="ChEBI" id="CHEBI:72998"/>
    </reaction>
    <physiologicalReaction direction="left-to-right" evidence="2">
        <dbReference type="Rhea" id="RHEA:40436"/>
    </physiologicalReaction>
</comment>
<comment type="catalytic activity">
    <reaction evidence="2">
        <text>2-(prostaglandin E2)-sn-glycero-3-phosphoethanolamine + H2O = sn-glycero-3-phosphoethanolamine + prostaglandin E2 + H(+)</text>
        <dbReference type="Rhea" id="RHEA:53704"/>
        <dbReference type="ChEBI" id="CHEBI:15377"/>
        <dbReference type="ChEBI" id="CHEBI:15378"/>
        <dbReference type="ChEBI" id="CHEBI:137581"/>
        <dbReference type="ChEBI" id="CHEBI:143890"/>
        <dbReference type="ChEBI" id="CHEBI:606564"/>
    </reaction>
    <physiologicalReaction direction="left-to-right" evidence="2">
        <dbReference type="Rhea" id="RHEA:53705"/>
    </physiologicalReaction>
</comment>
<comment type="catalytic activity">
    <reaction evidence="2">
        <text>2-[(15S)-hydroxy-(5Z,8Z,11Z,13E)-eicosatetraenoyl]-sn-glycero-3-phosphocholine + H2O = (15S)-hydroxy-(5Z,8Z,11Z,13E)-eicosatetraenoate + sn-glycerol 3-phosphocholine + H(+)</text>
        <dbReference type="Rhea" id="RHEA:53700"/>
        <dbReference type="ChEBI" id="CHEBI:15377"/>
        <dbReference type="ChEBI" id="CHEBI:15378"/>
        <dbReference type="ChEBI" id="CHEBI:16870"/>
        <dbReference type="ChEBI" id="CHEBI:57409"/>
        <dbReference type="ChEBI" id="CHEBI:137584"/>
    </reaction>
    <physiologicalReaction direction="left-to-right" evidence="2">
        <dbReference type="Rhea" id="RHEA:53701"/>
    </physiologicalReaction>
</comment>
<comment type="catalytic activity">
    <reaction evidence="2">
        <text>2-[(15R)-hydroxy-(5Z,8Z,11Z,13E)-eicosatetraenoyl]-sn-glycero-3-phosphocholine + H2O = (15R)-hydroxy-(5Z,8Z,11Z,13E)-eicosatetraenoate + sn-glycerol 3-phosphocholine + H(+)</text>
        <dbReference type="Rhea" id="RHEA:53696"/>
        <dbReference type="ChEBI" id="CHEBI:15377"/>
        <dbReference type="ChEBI" id="CHEBI:15378"/>
        <dbReference type="ChEBI" id="CHEBI:16870"/>
        <dbReference type="ChEBI" id="CHEBI:78837"/>
        <dbReference type="ChEBI" id="CHEBI:137583"/>
    </reaction>
    <physiologicalReaction direction="left-to-right" evidence="2">
        <dbReference type="Rhea" id="RHEA:53697"/>
    </physiologicalReaction>
</comment>
<comment type="catalytic activity">
    <reaction evidence="2">
        <text>2-(prostaglandin E2)-sn-glycero-3-phosphocholine + H2O = prostaglandin E2 + sn-glycerol 3-phosphocholine + H(+)</text>
        <dbReference type="Rhea" id="RHEA:53692"/>
        <dbReference type="ChEBI" id="CHEBI:15377"/>
        <dbReference type="ChEBI" id="CHEBI:15378"/>
        <dbReference type="ChEBI" id="CHEBI:16870"/>
        <dbReference type="ChEBI" id="CHEBI:137585"/>
        <dbReference type="ChEBI" id="CHEBI:606564"/>
    </reaction>
    <physiologicalReaction direction="left-to-right" evidence="2">
        <dbReference type="Rhea" id="RHEA:53693"/>
    </physiologicalReaction>
</comment>
<comment type="catalytic activity">
    <reaction evidence="2">
        <text>2-[(11R)-hydroxy-(5Z,8Z,12E,14Z)-eicosatetraenoyl]-sn-glycero-3-phosphocholine + H2O = (11R)-hydroxy-(5Z,8Z,12E,14Z)-eicosatetraenoate + sn-glycerol 3-phosphocholine + H(+)</text>
        <dbReference type="Rhea" id="RHEA:53688"/>
        <dbReference type="ChEBI" id="CHEBI:15377"/>
        <dbReference type="ChEBI" id="CHEBI:15378"/>
        <dbReference type="ChEBI" id="CHEBI:16870"/>
        <dbReference type="ChEBI" id="CHEBI:78836"/>
        <dbReference type="ChEBI" id="CHEBI:137582"/>
    </reaction>
    <physiologicalReaction direction="left-to-right" evidence="2">
        <dbReference type="Rhea" id="RHEA:53689"/>
    </physiologicalReaction>
</comment>
<comment type="catalytic activity">
    <reaction evidence="2">
        <text>1-(5Z,8Z,11Z,14Z-eicosatetraenoyl)-2-O-hexadecyl-sn-glycero-3-phosphocholine + H2O = 2-O-hexadecyl-sn-glycero-3-phosphocholine + (5Z,8Z,11Z,14Z)-eicosatetraenoate + H(+)</text>
        <dbReference type="Rhea" id="RHEA:41271"/>
        <dbReference type="ChEBI" id="CHEBI:15377"/>
        <dbReference type="ChEBI" id="CHEBI:15378"/>
        <dbReference type="ChEBI" id="CHEBI:32395"/>
        <dbReference type="ChEBI" id="CHEBI:77695"/>
        <dbReference type="ChEBI" id="CHEBI:77696"/>
    </reaction>
    <physiologicalReaction direction="left-to-right" evidence="2">
        <dbReference type="Rhea" id="RHEA:41272"/>
    </physiologicalReaction>
</comment>
<comment type="catalytic activity">
    <reaction evidence="2">
        <text>1-octadecanoyl-2-(5Z,8Z,11Z,14Z-eicosatetraenoyl)-sn-glycero-3-phosphocholine + glycerol = 1-(5Z,8Z,11Z,14Z-eicosatetraenoyl)-glycerol + 1-octadecanoyl-sn-glycero-3-phosphocholine</text>
        <dbReference type="Rhea" id="RHEA:41099"/>
        <dbReference type="ChEBI" id="CHEBI:17754"/>
        <dbReference type="ChEBI" id="CHEBI:73858"/>
        <dbReference type="ChEBI" id="CHEBI:74965"/>
        <dbReference type="ChEBI" id="CHEBI:75612"/>
    </reaction>
    <physiologicalReaction direction="left-to-right" evidence="2">
        <dbReference type="Rhea" id="RHEA:41100"/>
    </physiologicalReaction>
</comment>
<comment type="catalytic activity">
    <reaction evidence="2">
        <text>1-octadecanoyl-2-(9Z,12Z,15Z-octadecatrienoyl)-sn-glycero-3-phosphocholine + glycerol = 1-(9Z,12Z,15Z-octadecatrienoyl)-glycerol + 1-octadecanoyl-sn-glycero-3-phosphocholine</text>
        <dbReference type="Rhea" id="RHEA:41087"/>
        <dbReference type="ChEBI" id="CHEBI:17754"/>
        <dbReference type="ChEBI" id="CHEBI:73858"/>
        <dbReference type="ChEBI" id="CHEBI:75610"/>
        <dbReference type="ChEBI" id="CHEBI:78022"/>
    </reaction>
    <physiologicalReaction direction="left-to-right" evidence="2">
        <dbReference type="Rhea" id="RHEA:41088"/>
    </physiologicalReaction>
</comment>
<comment type="activity regulation">
    <text evidence="2 3">Activated by cytosolic calcium, which is necessary for binding to membrane lipids. Activated by phosphorylation in response to mitogenic stimuli.</text>
</comment>
<comment type="pathway">
    <text evidence="3">Membrane lipid metabolism; glycerophospholipid metabolism.</text>
</comment>
<comment type="pathway">
    <text evidence="2">Lipid metabolism; arachidonate metabolism.</text>
</comment>
<comment type="pathway">
    <text evidence="2">Lipid metabolism; prostaglandin biosynthesis.</text>
</comment>
<comment type="pathway">
    <text evidence="2">Lipid metabolism; leukotriene B4 biosynthesis.</text>
</comment>
<comment type="subunit">
    <text evidence="2">Interacts with KAT5.</text>
</comment>
<comment type="subcellular location">
    <subcellularLocation>
        <location evidence="2">Cytoplasm</location>
    </subcellularLocation>
    <subcellularLocation>
        <location evidence="2">Golgi apparatus membrane</location>
    </subcellularLocation>
    <subcellularLocation>
        <location evidence="2">Nucleus envelope</location>
    </subcellularLocation>
    <text evidence="2">Translocates to intracellular membranes in a calcium-dependent way.</text>
</comment>
<comment type="domain">
    <text evidence="2">The N-terminal C2 domain associates with lipid membranes upon calcium binding. It modulates enzyme activity by presenting the active site to its substrate in response to elevations of cytosolic calcium. In the presence of phosphoinositides, regulates phospholipase A2 and lysophospholipase activities in a calcium-independent way.</text>
</comment>
<comment type="PTM">
    <text evidence="2">Phosphorylated at both Ser-505 and Ser-727 in response to mitogenic stimuli.</text>
</comment>